<name>RR7_PYRYE</name>
<comment type="function">
    <text evidence="1">One of the primary rRNA binding proteins, it binds directly to 16S rRNA where it nucleates assembly of the head domain of the 30S subunit.</text>
</comment>
<comment type="subunit">
    <text>Part of the 30S ribosomal subunit.</text>
</comment>
<comment type="subcellular location">
    <subcellularLocation>
        <location>Plastid</location>
        <location>Chloroplast</location>
    </subcellularLocation>
</comment>
<comment type="similarity">
    <text evidence="2">Belongs to the universal ribosomal protein uS7 family.</text>
</comment>
<feature type="chain" id="PRO_0000277066" description="Small ribosomal subunit protein uS7c">
    <location>
        <begin position="1"/>
        <end position="156"/>
    </location>
</feature>
<geneLocation type="chloroplast"/>
<dbReference type="EMBL" id="AP006715">
    <property type="protein sequence ID" value="BAE92411.1"/>
    <property type="molecule type" value="Genomic_DNA"/>
</dbReference>
<dbReference type="RefSeq" id="YP_536968.1">
    <property type="nucleotide sequence ID" value="NC_007932.1"/>
</dbReference>
<dbReference type="SMR" id="Q1XDK0"/>
<dbReference type="GeneID" id="3978854"/>
<dbReference type="GO" id="GO:0009507">
    <property type="term" value="C:chloroplast"/>
    <property type="evidence" value="ECO:0007669"/>
    <property type="project" value="UniProtKB-SubCell"/>
</dbReference>
<dbReference type="GO" id="GO:0015935">
    <property type="term" value="C:small ribosomal subunit"/>
    <property type="evidence" value="ECO:0007669"/>
    <property type="project" value="InterPro"/>
</dbReference>
<dbReference type="GO" id="GO:0019843">
    <property type="term" value="F:rRNA binding"/>
    <property type="evidence" value="ECO:0007669"/>
    <property type="project" value="UniProtKB-UniRule"/>
</dbReference>
<dbReference type="GO" id="GO:0003735">
    <property type="term" value="F:structural constituent of ribosome"/>
    <property type="evidence" value="ECO:0007669"/>
    <property type="project" value="InterPro"/>
</dbReference>
<dbReference type="GO" id="GO:0006412">
    <property type="term" value="P:translation"/>
    <property type="evidence" value="ECO:0007669"/>
    <property type="project" value="UniProtKB-UniRule"/>
</dbReference>
<dbReference type="CDD" id="cd14871">
    <property type="entry name" value="uS7_Chloroplast"/>
    <property type="match status" value="1"/>
</dbReference>
<dbReference type="FunFam" id="1.10.455.10:FF:000001">
    <property type="entry name" value="30S ribosomal protein S7"/>
    <property type="match status" value="1"/>
</dbReference>
<dbReference type="Gene3D" id="1.10.455.10">
    <property type="entry name" value="Ribosomal protein S7 domain"/>
    <property type="match status" value="1"/>
</dbReference>
<dbReference type="HAMAP" id="MF_00480_B">
    <property type="entry name" value="Ribosomal_uS7_B"/>
    <property type="match status" value="1"/>
</dbReference>
<dbReference type="InterPro" id="IPR000235">
    <property type="entry name" value="Ribosomal_uS7"/>
</dbReference>
<dbReference type="InterPro" id="IPR005717">
    <property type="entry name" value="Ribosomal_uS7_bac/org-type"/>
</dbReference>
<dbReference type="InterPro" id="IPR020606">
    <property type="entry name" value="Ribosomal_uS7_CS"/>
</dbReference>
<dbReference type="InterPro" id="IPR023798">
    <property type="entry name" value="Ribosomal_uS7_dom"/>
</dbReference>
<dbReference type="InterPro" id="IPR036823">
    <property type="entry name" value="Ribosomal_uS7_dom_sf"/>
</dbReference>
<dbReference type="NCBIfam" id="TIGR01029">
    <property type="entry name" value="rpsG_bact"/>
    <property type="match status" value="1"/>
</dbReference>
<dbReference type="PANTHER" id="PTHR11205">
    <property type="entry name" value="RIBOSOMAL PROTEIN S7"/>
    <property type="match status" value="1"/>
</dbReference>
<dbReference type="Pfam" id="PF00177">
    <property type="entry name" value="Ribosomal_S7"/>
    <property type="match status" value="1"/>
</dbReference>
<dbReference type="PIRSF" id="PIRSF002122">
    <property type="entry name" value="RPS7p_RPS7a_RPS5e_RPS7o"/>
    <property type="match status" value="1"/>
</dbReference>
<dbReference type="SUPFAM" id="SSF47973">
    <property type="entry name" value="Ribosomal protein S7"/>
    <property type="match status" value="1"/>
</dbReference>
<dbReference type="PROSITE" id="PS00052">
    <property type="entry name" value="RIBOSOMAL_S7"/>
    <property type="match status" value="1"/>
</dbReference>
<protein>
    <recommendedName>
        <fullName evidence="2">Small ribosomal subunit protein uS7c</fullName>
    </recommendedName>
    <alternativeName>
        <fullName>30S ribosomal protein S7, chloroplastic</fullName>
    </alternativeName>
</protein>
<sequence length="156" mass="17960">MSRRNTAKKRFASPDPLYKSRLVSMLTVRILKSGKKTLSQRIIYQALDIVKERTESDPLNILEKAIRNITPLVEVKARRVGGSTYQVPIEVRAYRGTNLALRWITKFSRDRSGKSMSMKLANEIMDAANETGNSIRKREDTHRMAEANKAFAHYRY</sequence>
<organism>
    <name type="scientific">Pyropia yezoensis</name>
    <name type="common">Susabi-nori</name>
    <name type="synonym">Porphyra yezoensis</name>
    <dbReference type="NCBI Taxonomy" id="2788"/>
    <lineage>
        <taxon>Eukaryota</taxon>
        <taxon>Rhodophyta</taxon>
        <taxon>Bangiophyceae</taxon>
        <taxon>Bangiales</taxon>
        <taxon>Bangiaceae</taxon>
        <taxon>Pyropia</taxon>
    </lineage>
</organism>
<proteinExistence type="inferred from homology"/>
<evidence type="ECO:0000250" key="1"/>
<evidence type="ECO:0000305" key="2"/>
<accession>Q1XDK0</accession>
<reference key="1">
    <citation type="submission" date="2003-11" db="EMBL/GenBank/DDBJ databases">
        <title>Whole genome sequence of Porphyra yezoensis chloroplast.</title>
        <authorList>
            <person name="Kunimoto M."/>
            <person name="Morishima K."/>
            <person name="Yoshikawa M."/>
            <person name="Fukuda S."/>
            <person name="Kobayashi T."/>
            <person name="Kobayashi M."/>
            <person name="Okazaki T."/>
            <person name="Ohara I."/>
            <person name="Nakayama I."/>
        </authorList>
    </citation>
    <scope>NUCLEOTIDE SEQUENCE [LARGE SCALE GENOMIC DNA]</scope>
    <source>
        <strain>U-51</strain>
    </source>
</reference>
<gene>
    <name type="primary">rps7</name>
</gene>
<keyword id="KW-0150">Chloroplast</keyword>
<keyword id="KW-0934">Plastid</keyword>
<keyword id="KW-0687">Ribonucleoprotein</keyword>
<keyword id="KW-0689">Ribosomal protein</keyword>
<keyword id="KW-0694">RNA-binding</keyword>
<keyword id="KW-0699">rRNA-binding</keyword>